<feature type="chain" id="PRO_0000163733" description="1-deoxy-D-xylulose 5-phosphate reductoisomerase">
    <location>
        <begin position="1"/>
        <end position="402"/>
    </location>
</feature>
<feature type="binding site" evidence="1">
    <location>
        <position position="10"/>
    </location>
    <ligand>
        <name>NADPH</name>
        <dbReference type="ChEBI" id="CHEBI:57783"/>
    </ligand>
</feature>
<feature type="binding site" evidence="1">
    <location>
        <position position="11"/>
    </location>
    <ligand>
        <name>NADPH</name>
        <dbReference type="ChEBI" id="CHEBI:57783"/>
    </ligand>
</feature>
<feature type="binding site" evidence="1">
    <location>
        <position position="12"/>
    </location>
    <ligand>
        <name>NADPH</name>
        <dbReference type="ChEBI" id="CHEBI:57783"/>
    </ligand>
</feature>
<feature type="binding site" evidence="1">
    <location>
        <position position="13"/>
    </location>
    <ligand>
        <name>NADPH</name>
        <dbReference type="ChEBI" id="CHEBI:57783"/>
    </ligand>
</feature>
<feature type="binding site" evidence="1">
    <location>
        <position position="38"/>
    </location>
    <ligand>
        <name>NADPH</name>
        <dbReference type="ChEBI" id="CHEBI:57783"/>
    </ligand>
</feature>
<feature type="binding site" evidence="1">
    <location>
        <position position="124"/>
    </location>
    <ligand>
        <name>NADPH</name>
        <dbReference type="ChEBI" id="CHEBI:57783"/>
    </ligand>
</feature>
<feature type="binding site" evidence="1">
    <location>
        <position position="125"/>
    </location>
    <ligand>
        <name>1-deoxy-D-xylulose 5-phosphate</name>
        <dbReference type="ChEBI" id="CHEBI:57792"/>
    </ligand>
</feature>
<feature type="binding site" evidence="1">
    <location>
        <position position="126"/>
    </location>
    <ligand>
        <name>NADPH</name>
        <dbReference type="ChEBI" id="CHEBI:57783"/>
    </ligand>
</feature>
<feature type="binding site" evidence="1">
    <location>
        <position position="150"/>
    </location>
    <ligand>
        <name>Mn(2+)</name>
        <dbReference type="ChEBI" id="CHEBI:29035"/>
    </ligand>
</feature>
<feature type="binding site" evidence="1">
    <location>
        <position position="151"/>
    </location>
    <ligand>
        <name>1-deoxy-D-xylulose 5-phosphate</name>
        <dbReference type="ChEBI" id="CHEBI:57792"/>
    </ligand>
</feature>
<feature type="binding site" evidence="1">
    <location>
        <position position="152"/>
    </location>
    <ligand>
        <name>1-deoxy-D-xylulose 5-phosphate</name>
        <dbReference type="ChEBI" id="CHEBI:57792"/>
    </ligand>
</feature>
<feature type="binding site" evidence="1">
    <location>
        <position position="152"/>
    </location>
    <ligand>
        <name>Mn(2+)</name>
        <dbReference type="ChEBI" id="CHEBI:29035"/>
    </ligand>
</feature>
<feature type="binding site" evidence="1">
    <location>
        <position position="186"/>
    </location>
    <ligand>
        <name>1-deoxy-D-xylulose 5-phosphate</name>
        <dbReference type="ChEBI" id="CHEBI:57792"/>
    </ligand>
</feature>
<feature type="binding site" evidence="1">
    <location>
        <position position="209"/>
    </location>
    <ligand>
        <name>1-deoxy-D-xylulose 5-phosphate</name>
        <dbReference type="ChEBI" id="CHEBI:57792"/>
    </ligand>
</feature>
<feature type="binding site" evidence="1">
    <location>
        <position position="215"/>
    </location>
    <ligand>
        <name>NADPH</name>
        <dbReference type="ChEBI" id="CHEBI:57783"/>
    </ligand>
</feature>
<feature type="binding site" evidence="1">
    <location>
        <position position="222"/>
    </location>
    <ligand>
        <name>1-deoxy-D-xylulose 5-phosphate</name>
        <dbReference type="ChEBI" id="CHEBI:57792"/>
    </ligand>
</feature>
<feature type="binding site" evidence="1">
    <location>
        <position position="227"/>
    </location>
    <ligand>
        <name>1-deoxy-D-xylulose 5-phosphate</name>
        <dbReference type="ChEBI" id="CHEBI:57792"/>
    </ligand>
</feature>
<feature type="binding site" evidence="1">
    <location>
        <position position="228"/>
    </location>
    <ligand>
        <name>1-deoxy-D-xylulose 5-phosphate</name>
        <dbReference type="ChEBI" id="CHEBI:57792"/>
    </ligand>
</feature>
<feature type="binding site" evidence="1">
    <location>
        <position position="231"/>
    </location>
    <ligand>
        <name>1-deoxy-D-xylulose 5-phosphate</name>
        <dbReference type="ChEBI" id="CHEBI:57792"/>
    </ligand>
</feature>
<feature type="binding site" evidence="1">
    <location>
        <position position="231"/>
    </location>
    <ligand>
        <name>Mn(2+)</name>
        <dbReference type="ChEBI" id="CHEBI:29035"/>
    </ligand>
</feature>
<feature type="strand" evidence="2">
    <location>
        <begin position="2"/>
        <end position="8"/>
    </location>
</feature>
<feature type="helix" evidence="2">
    <location>
        <begin position="12"/>
        <end position="23"/>
    </location>
</feature>
<feature type="turn" evidence="2">
    <location>
        <begin position="25"/>
        <end position="27"/>
    </location>
</feature>
<feature type="strand" evidence="2">
    <location>
        <begin position="28"/>
        <end position="37"/>
    </location>
</feature>
<feature type="helix" evidence="2">
    <location>
        <begin position="39"/>
        <end position="49"/>
    </location>
</feature>
<feature type="strand" evidence="2">
    <location>
        <begin position="52"/>
        <end position="58"/>
    </location>
</feature>
<feature type="helix" evidence="2">
    <location>
        <begin position="59"/>
        <end position="72"/>
    </location>
</feature>
<feature type="strand" evidence="2">
    <location>
        <begin position="77"/>
        <end position="81"/>
    </location>
</feature>
<feature type="helix" evidence="2">
    <location>
        <begin position="82"/>
        <end position="89"/>
    </location>
</feature>
<feature type="strand" evidence="2">
    <location>
        <begin position="96"/>
        <end position="99"/>
    </location>
</feature>
<feature type="helix" evidence="2">
    <location>
        <begin position="104"/>
        <end position="106"/>
    </location>
</feature>
<feature type="helix" evidence="2">
    <location>
        <begin position="107"/>
        <end position="115"/>
    </location>
</feature>
<feature type="strand" evidence="2">
    <location>
        <begin position="119"/>
        <end position="122"/>
    </location>
</feature>
<feature type="helix" evidence="2">
    <location>
        <begin position="126"/>
        <end position="142"/>
    </location>
</feature>
<feature type="strand" evidence="2">
    <location>
        <begin position="145"/>
        <end position="148"/>
    </location>
</feature>
<feature type="helix" evidence="2">
    <location>
        <begin position="151"/>
        <end position="159"/>
    </location>
</feature>
<feature type="helix" evidence="2">
    <location>
        <begin position="162"/>
        <end position="165"/>
    </location>
</feature>
<feature type="turn" evidence="2">
    <location>
        <begin position="166"/>
        <end position="170"/>
    </location>
</feature>
<feature type="helix" evidence="2">
    <location>
        <begin position="174"/>
        <end position="176"/>
    </location>
</feature>
<feature type="strand" evidence="2">
    <location>
        <begin position="178"/>
        <end position="185"/>
    </location>
</feature>
<feature type="turn" evidence="2">
    <location>
        <begin position="189"/>
        <end position="192"/>
    </location>
</feature>
<feature type="helix" evidence="2">
    <location>
        <begin position="195"/>
        <end position="200"/>
    </location>
</feature>
<feature type="helix" evidence="2">
    <location>
        <begin position="203"/>
        <end position="207"/>
    </location>
</feature>
<feature type="helix" evidence="2">
    <location>
        <begin position="216"/>
        <end position="224"/>
    </location>
</feature>
<feature type="helix" evidence="2">
    <location>
        <begin position="226"/>
        <end position="239"/>
    </location>
</feature>
<feature type="strand" evidence="2">
    <location>
        <begin position="245"/>
        <end position="250"/>
    </location>
</feature>
<feature type="strand" evidence="2">
    <location>
        <begin position="256"/>
        <end position="262"/>
    </location>
</feature>
<feature type="strand" evidence="2">
    <location>
        <begin position="267"/>
        <end position="271"/>
    </location>
</feature>
<feature type="helix" evidence="2">
    <location>
        <begin position="277"/>
        <end position="285"/>
    </location>
</feature>
<feature type="helix" evidence="3">
    <location>
        <begin position="299"/>
        <end position="301"/>
    </location>
</feature>
<feature type="turn" evidence="2">
    <location>
        <begin position="312"/>
        <end position="314"/>
    </location>
</feature>
<feature type="helix" evidence="2">
    <location>
        <begin position="316"/>
        <end position="327"/>
    </location>
</feature>
<feature type="helix" evidence="2">
    <location>
        <begin position="329"/>
        <end position="347"/>
    </location>
</feature>
<feature type="helix" evidence="2">
    <location>
        <begin position="355"/>
        <end position="368"/>
    </location>
</feature>
<feature type="helix" evidence="2">
    <location>
        <begin position="379"/>
        <end position="400"/>
    </location>
</feature>
<gene>
    <name evidence="1" type="primary">dxr</name>
    <name type="ordered locus">VV1_1866</name>
</gene>
<protein>
    <recommendedName>
        <fullName evidence="1">1-deoxy-D-xylulose 5-phosphate reductoisomerase</fullName>
        <shortName evidence="1">DXP reductoisomerase</shortName>
        <ecNumber evidence="1">1.1.1.267</ecNumber>
    </recommendedName>
    <alternativeName>
        <fullName evidence="1">1-deoxyxylulose-5-phosphate reductoisomerase</fullName>
    </alternativeName>
    <alternativeName>
        <fullName evidence="1">2-C-methyl-D-erythritol 4-phosphate synthase</fullName>
    </alternativeName>
</protein>
<name>DXR_VIBVU</name>
<reference key="1">
    <citation type="submission" date="2002-12" db="EMBL/GenBank/DDBJ databases">
        <title>Complete genome sequence of Vibrio vulnificus CMCP6.</title>
        <authorList>
            <person name="Rhee J.H."/>
            <person name="Kim S.Y."/>
            <person name="Chung S.S."/>
            <person name="Kim J.J."/>
            <person name="Moon Y.H."/>
            <person name="Jeong H."/>
            <person name="Choy H.E."/>
        </authorList>
    </citation>
    <scope>NUCLEOTIDE SEQUENCE [LARGE SCALE GENOMIC DNA]</scope>
    <source>
        <strain>CMCP6</strain>
    </source>
</reference>
<evidence type="ECO:0000255" key="1">
    <source>
        <dbReference type="HAMAP-Rule" id="MF_00183"/>
    </source>
</evidence>
<evidence type="ECO:0007829" key="2">
    <source>
        <dbReference type="PDB" id="5KRV"/>
    </source>
</evidence>
<evidence type="ECO:0007829" key="3">
    <source>
        <dbReference type="PDB" id="5KS1"/>
    </source>
</evidence>
<keyword id="KW-0002">3D-structure</keyword>
<keyword id="KW-0414">Isoprene biosynthesis</keyword>
<keyword id="KW-0464">Manganese</keyword>
<keyword id="KW-0479">Metal-binding</keyword>
<keyword id="KW-0521">NADP</keyword>
<keyword id="KW-0560">Oxidoreductase</keyword>
<sequence length="402" mass="43352">MQKLTILGATGSIGASTLKVIEQNPDKFSVVALAADSNVEKMQQLCQRWQPEYAVMANKEAALRLKMALAVLAPNTQVLGGQEALCYVATLEQVDSVMAAIVGAAGLVPTMAAVKAGKRILLANKEALVMSGQLFIDEVEKSGAQLLPVDSEHNAIFQCLPQTVQGNLGRCDLASQGVSHILLTGSGGPFRYTDVAELEAVTPEQAIAHPNWSMGPKISVDSATMMNKGLEYIEAKWLFNASRDQLKVIIHPQSVIHSMVQYLDGSVLAQMGEPDMATPIALTLSYPERVKAGVKPLDFTQVGELTFLQPDFERYPCLALAIEACYLGQHATTTLNAANEVAVAAFLARQIKFTDIARVNDSVLNQVCKQSLASGLDSLESLLELDRMARTLADEVVRERAQ</sequence>
<proteinExistence type="evidence at protein level"/>
<dbReference type="EC" id="1.1.1.267" evidence="1"/>
<dbReference type="EMBL" id="AE016795">
    <property type="protein sequence ID" value="AAO10268.1"/>
    <property type="molecule type" value="Genomic_DNA"/>
</dbReference>
<dbReference type="RefSeq" id="WP_011079768.1">
    <property type="nucleotide sequence ID" value="NC_004459.3"/>
</dbReference>
<dbReference type="PDB" id="5KQO">
    <property type="method" value="X-ray"/>
    <property type="resolution" value="2.35 A"/>
    <property type="chains" value="A/B=1-402"/>
</dbReference>
<dbReference type="PDB" id="5KRR">
    <property type="method" value="X-ray"/>
    <property type="resolution" value="2.50 A"/>
    <property type="chains" value="A/B=1-402"/>
</dbReference>
<dbReference type="PDB" id="5KRV">
    <property type="method" value="X-ray"/>
    <property type="resolution" value="2.30 A"/>
    <property type="chains" value="A/B=1-402"/>
</dbReference>
<dbReference type="PDB" id="5KRY">
    <property type="method" value="X-ray"/>
    <property type="resolution" value="2.30 A"/>
    <property type="chains" value="A/B=1-402"/>
</dbReference>
<dbReference type="PDB" id="5KS1">
    <property type="method" value="X-ray"/>
    <property type="resolution" value="2.40 A"/>
    <property type="chains" value="A/B=1-402"/>
</dbReference>
<dbReference type="PDBsum" id="5KQO"/>
<dbReference type="PDBsum" id="5KRR"/>
<dbReference type="PDBsum" id="5KRV"/>
<dbReference type="PDBsum" id="5KRY"/>
<dbReference type="PDBsum" id="5KS1"/>
<dbReference type="SMR" id="Q8DBF5"/>
<dbReference type="KEGG" id="vvu:VV1_1866"/>
<dbReference type="HOGENOM" id="CLU_035714_4_0_6"/>
<dbReference type="UniPathway" id="UPA00056">
    <property type="reaction ID" value="UER00092"/>
</dbReference>
<dbReference type="Proteomes" id="UP000002275">
    <property type="component" value="Chromosome 1"/>
</dbReference>
<dbReference type="GO" id="GO:0030604">
    <property type="term" value="F:1-deoxy-D-xylulose-5-phosphate reductoisomerase activity"/>
    <property type="evidence" value="ECO:0007669"/>
    <property type="project" value="UniProtKB-UniRule"/>
</dbReference>
<dbReference type="GO" id="GO:0030145">
    <property type="term" value="F:manganese ion binding"/>
    <property type="evidence" value="ECO:0007669"/>
    <property type="project" value="TreeGrafter"/>
</dbReference>
<dbReference type="GO" id="GO:0070402">
    <property type="term" value="F:NADPH binding"/>
    <property type="evidence" value="ECO:0007669"/>
    <property type="project" value="InterPro"/>
</dbReference>
<dbReference type="GO" id="GO:0051484">
    <property type="term" value="P:isopentenyl diphosphate biosynthetic process, methylerythritol 4-phosphate pathway involved in terpenoid biosynthetic process"/>
    <property type="evidence" value="ECO:0007669"/>
    <property type="project" value="TreeGrafter"/>
</dbReference>
<dbReference type="FunFam" id="1.10.1740.10:FF:000004">
    <property type="entry name" value="1-deoxy-D-xylulose 5-phosphate reductoisomerase"/>
    <property type="match status" value="1"/>
</dbReference>
<dbReference type="FunFam" id="3.40.50.720:FF:000045">
    <property type="entry name" value="1-deoxy-D-xylulose 5-phosphate reductoisomerase"/>
    <property type="match status" value="1"/>
</dbReference>
<dbReference type="Gene3D" id="1.10.1740.10">
    <property type="match status" value="1"/>
</dbReference>
<dbReference type="Gene3D" id="3.40.50.720">
    <property type="entry name" value="NAD(P)-binding Rossmann-like Domain"/>
    <property type="match status" value="1"/>
</dbReference>
<dbReference type="HAMAP" id="MF_00183">
    <property type="entry name" value="DXP_reductoisom"/>
    <property type="match status" value="1"/>
</dbReference>
<dbReference type="InterPro" id="IPR003821">
    <property type="entry name" value="DXP_reductoisomerase"/>
</dbReference>
<dbReference type="InterPro" id="IPR013644">
    <property type="entry name" value="DXP_reductoisomerase_C"/>
</dbReference>
<dbReference type="InterPro" id="IPR013512">
    <property type="entry name" value="DXP_reductoisomerase_N"/>
</dbReference>
<dbReference type="InterPro" id="IPR026877">
    <property type="entry name" value="DXPR_C"/>
</dbReference>
<dbReference type="InterPro" id="IPR036169">
    <property type="entry name" value="DXPR_C_sf"/>
</dbReference>
<dbReference type="InterPro" id="IPR036291">
    <property type="entry name" value="NAD(P)-bd_dom_sf"/>
</dbReference>
<dbReference type="NCBIfam" id="TIGR00243">
    <property type="entry name" value="Dxr"/>
    <property type="match status" value="1"/>
</dbReference>
<dbReference type="NCBIfam" id="NF003938">
    <property type="entry name" value="PRK05447.1-1"/>
    <property type="match status" value="1"/>
</dbReference>
<dbReference type="NCBIfam" id="NF009114">
    <property type="entry name" value="PRK12464.1"/>
    <property type="match status" value="1"/>
</dbReference>
<dbReference type="PANTHER" id="PTHR30525">
    <property type="entry name" value="1-DEOXY-D-XYLULOSE 5-PHOSPHATE REDUCTOISOMERASE"/>
    <property type="match status" value="1"/>
</dbReference>
<dbReference type="PANTHER" id="PTHR30525:SF0">
    <property type="entry name" value="1-DEOXY-D-XYLULOSE 5-PHOSPHATE REDUCTOISOMERASE, CHLOROPLASTIC"/>
    <property type="match status" value="1"/>
</dbReference>
<dbReference type="Pfam" id="PF08436">
    <property type="entry name" value="DXP_redisom_C"/>
    <property type="match status" value="1"/>
</dbReference>
<dbReference type="Pfam" id="PF02670">
    <property type="entry name" value="DXP_reductoisom"/>
    <property type="match status" value="1"/>
</dbReference>
<dbReference type="Pfam" id="PF13288">
    <property type="entry name" value="DXPR_C"/>
    <property type="match status" value="1"/>
</dbReference>
<dbReference type="PIRSF" id="PIRSF006205">
    <property type="entry name" value="Dxp_reductismrs"/>
    <property type="match status" value="1"/>
</dbReference>
<dbReference type="SUPFAM" id="SSF69055">
    <property type="entry name" value="1-deoxy-D-xylulose-5-phosphate reductoisomerase, C-terminal domain"/>
    <property type="match status" value="1"/>
</dbReference>
<dbReference type="SUPFAM" id="SSF55347">
    <property type="entry name" value="Glyceraldehyde-3-phosphate dehydrogenase-like, C-terminal domain"/>
    <property type="match status" value="1"/>
</dbReference>
<dbReference type="SUPFAM" id="SSF51735">
    <property type="entry name" value="NAD(P)-binding Rossmann-fold domains"/>
    <property type="match status" value="1"/>
</dbReference>
<accession>Q8DBF5</accession>
<comment type="function">
    <text evidence="1">Catalyzes the NADPH-dependent rearrangement and reduction of 1-deoxy-D-xylulose-5-phosphate (DXP) to 2-C-methyl-D-erythritol 4-phosphate (MEP).</text>
</comment>
<comment type="catalytic activity">
    <reaction evidence="1">
        <text>2-C-methyl-D-erythritol 4-phosphate + NADP(+) = 1-deoxy-D-xylulose 5-phosphate + NADPH + H(+)</text>
        <dbReference type="Rhea" id="RHEA:13717"/>
        <dbReference type="ChEBI" id="CHEBI:15378"/>
        <dbReference type="ChEBI" id="CHEBI:57783"/>
        <dbReference type="ChEBI" id="CHEBI:57792"/>
        <dbReference type="ChEBI" id="CHEBI:58262"/>
        <dbReference type="ChEBI" id="CHEBI:58349"/>
        <dbReference type="EC" id="1.1.1.267"/>
    </reaction>
    <physiologicalReaction direction="right-to-left" evidence="1">
        <dbReference type="Rhea" id="RHEA:13719"/>
    </physiologicalReaction>
</comment>
<comment type="cofactor">
    <cofactor evidence="1">
        <name>Mg(2+)</name>
        <dbReference type="ChEBI" id="CHEBI:18420"/>
    </cofactor>
    <cofactor evidence="1">
        <name>Mn(2+)</name>
        <dbReference type="ChEBI" id="CHEBI:29035"/>
    </cofactor>
</comment>
<comment type="pathway">
    <text evidence="1">Isoprenoid biosynthesis; isopentenyl diphosphate biosynthesis via DXP pathway; isopentenyl diphosphate from 1-deoxy-D-xylulose 5-phosphate: step 1/6.</text>
</comment>
<comment type="similarity">
    <text evidence="1">Belongs to the DXR family.</text>
</comment>
<organism>
    <name type="scientific">Vibrio vulnificus (strain CMCP6)</name>
    <dbReference type="NCBI Taxonomy" id="216895"/>
    <lineage>
        <taxon>Bacteria</taxon>
        <taxon>Pseudomonadati</taxon>
        <taxon>Pseudomonadota</taxon>
        <taxon>Gammaproteobacteria</taxon>
        <taxon>Vibrionales</taxon>
        <taxon>Vibrionaceae</taxon>
        <taxon>Vibrio</taxon>
    </lineage>
</organism>